<keyword id="KW-1267">Proteomics identification</keyword>
<keyword id="KW-1185">Reference proteome</keyword>
<sequence>MQHPKPFCAPAAPQEGFSPQSLEGAEVLGNQPAPTCAEPPPAMGSLNLYHPPDPEKEVFPAPPAGFQMAPCGCFFDPRIYRIEWTTPDLGQSALYKLAASSGGPAGVPSAPGSYLLEPQPYLKAPGLPPYPHYQQAPGGPQFLLPYFPPEGPGPEALGFVGDAGPAAFVELPLPPLEEGPAPLPPPPPKENKPPPVLITLPAEPTLPPDAYSHLQGHLGHFPGPEPLAFPVKELQGSGARPGVPLYPPGLSELKVAEVKEGALLGAGKAKAPKTARALALPDKVLLEDAMKLFDCLPGASEPEGTLCEVPGPALPDSSGGNSADDIRSLCLPEELLSFDYSVPEILDTVSNVDYFFNFKALDEEQPPHPGPPATNTPAPILSGKRKASTAKKGKPGRKARQPAGPASATPPGPREDLGATPH</sequence>
<proteinExistence type="evidence at protein level"/>
<organism>
    <name type="scientific">Homo sapiens</name>
    <name type="common">Human</name>
    <dbReference type="NCBI Taxonomy" id="9606"/>
    <lineage>
        <taxon>Eukaryota</taxon>
        <taxon>Metazoa</taxon>
        <taxon>Chordata</taxon>
        <taxon>Craniata</taxon>
        <taxon>Vertebrata</taxon>
        <taxon>Euteleostomi</taxon>
        <taxon>Mammalia</taxon>
        <taxon>Eutheria</taxon>
        <taxon>Euarchontoglires</taxon>
        <taxon>Primates</taxon>
        <taxon>Haplorrhini</taxon>
        <taxon>Catarrhini</taxon>
        <taxon>Hominidae</taxon>
        <taxon>Homo</taxon>
    </lineage>
</organism>
<protein>
    <recommendedName>
        <fullName>Proline-rich protein 22</fullName>
    </recommendedName>
</protein>
<comment type="sequence caution" evidence="2">
    <conflict type="miscellaneous discrepancy">
        <sequence resource="EMBL-CDS" id="AAH08985"/>
    </conflict>
    <text>Probable cloning artifact.</text>
</comment>
<comment type="sequence caution" evidence="2">
    <conflict type="miscellaneous discrepancy">
        <sequence resource="EMBL-CDS" id="AAH23278"/>
    </conflict>
    <text>Probable cloning artifact.</text>
</comment>
<comment type="sequence caution" evidence="2">
    <conflict type="erroneous gene model prediction">
        <sequence resource="EMBL-CDS" id="EAW69147"/>
    </conflict>
</comment>
<evidence type="ECO:0000256" key="1">
    <source>
        <dbReference type="SAM" id="MobiDB-lite"/>
    </source>
</evidence>
<evidence type="ECO:0000305" key="2"/>
<feature type="chain" id="PRO_0000332165" description="Proline-rich protein 22">
    <location>
        <begin position="1"/>
        <end position="422"/>
    </location>
</feature>
<feature type="region of interest" description="Disordered" evidence="1">
    <location>
        <begin position="1"/>
        <end position="35"/>
    </location>
</feature>
<feature type="region of interest" description="Disordered" evidence="1">
    <location>
        <begin position="306"/>
        <end position="325"/>
    </location>
</feature>
<feature type="region of interest" description="Disordered" evidence="1">
    <location>
        <begin position="363"/>
        <end position="422"/>
    </location>
</feature>
<feature type="compositionally biased region" description="Basic residues" evidence="1">
    <location>
        <begin position="383"/>
        <end position="400"/>
    </location>
</feature>
<feature type="compositionally biased region" description="Basic and acidic residues" evidence="1">
    <location>
        <begin position="413"/>
        <end position="422"/>
    </location>
</feature>
<feature type="sequence variant" id="VAR_042962" description="In dbSNP:rs3745640.">
    <original>P</original>
    <variation>L</variation>
    <location>
        <position position="118"/>
    </location>
</feature>
<feature type="sequence conflict" description="In Ref. 4; BQ082540." evidence="2" ref="4">
    <original>P</original>
    <variation>L</variation>
    <location>
        <position position="120"/>
    </location>
</feature>
<accession>Q8IZ63</accession>
<accession>E9PB31</accession>
<gene>
    <name type="primary">PRR22</name>
</gene>
<reference key="1">
    <citation type="journal article" date="2004" name="Nature">
        <title>The DNA sequence and biology of human chromosome 19.</title>
        <authorList>
            <person name="Grimwood J."/>
            <person name="Gordon L.A."/>
            <person name="Olsen A.S."/>
            <person name="Terry A."/>
            <person name="Schmutz J."/>
            <person name="Lamerdin J.E."/>
            <person name="Hellsten U."/>
            <person name="Goodstein D."/>
            <person name="Couronne O."/>
            <person name="Tran-Gyamfi M."/>
            <person name="Aerts A."/>
            <person name="Altherr M."/>
            <person name="Ashworth L."/>
            <person name="Bajorek E."/>
            <person name="Black S."/>
            <person name="Branscomb E."/>
            <person name="Caenepeel S."/>
            <person name="Carrano A.V."/>
            <person name="Caoile C."/>
            <person name="Chan Y.M."/>
            <person name="Christensen M."/>
            <person name="Cleland C.A."/>
            <person name="Copeland A."/>
            <person name="Dalin E."/>
            <person name="Dehal P."/>
            <person name="Denys M."/>
            <person name="Detter J.C."/>
            <person name="Escobar J."/>
            <person name="Flowers D."/>
            <person name="Fotopulos D."/>
            <person name="Garcia C."/>
            <person name="Georgescu A.M."/>
            <person name="Glavina T."/>
            <person name="Gomez M."/>
            <person name="Gonzales E."/>
            <person name="Groza M."/>
            <person name="Hammon N."/>
            <person name="Hawkins T."/>
            <person name="Haydu L."/>
            <person name="Ho I."/>
            <person name="Huang W."/>
            <person name="Israni S."/>
            <person name="Jett J."/>
            <person name="Kadner K."/>
            <person name="Kimball H."/>
            <person name="Kobayashi A."/>
            <person name="Larionov V."/>
            <person name="Leem S.-H."/>
            <person name="Lopez F."/>
            <person name="Lou Y."/>
            <person name="Lowry S."/>
            <person name="Malfatti S."/>
            <person name="Martinez D."/>
            <person name="McCready P.M."/>
            <person name="Medina C."/>
            <person name="Morgan J."/>
            <person name="Nelson K."/>
            <person name="Nolan M."/>
            <person name="Ovcharenko I."/>
            <person name="Pitluck S."/>
            <person name="Pollard M."/>
            <person name="Popkie A.P."/>
            <person name="Predki P."/>
            <person name="Quan G."/>
            <person name="Ramirez L."/>
            <person name="Rash S."/>
            <person name="Retterer J."/>
            <person name="Rodriguez A."/>
            <person name="Rogers S."/>
            <person name="Salamov A."/>
            <person name="Salazar A."/>
            <person name="She X."/>
            <person name="Smith D."/>
            <person name="Slezak T."/>
            <person name="Solovyev V."/>
            <person name="Thayer N."/>
            <person name="Tice H."/>
            <person name="Tsai M."/>
            <person name="Ustaszewska A."/>
            <person name="Vo N."/>
            <person name="Wagner M."/>
            <person name="Wheeler J."/>
            <person name="Wu K."/>
            <person name="Xie G."/>
            <person name="Yang J."/>
            <person name="Dubchak I."/>
            <person name="Furey T.S."/>
            <person name="DeJong P."/>
            <person name="Dickson M."/>
            <person name="Gordon D."/>
            <person name="Eichler E.E."/>
            <person name="Pennacchio L.A."/>
            <person name="Richardson P."/>
            <person name="Stubbs L."/>
            <person name="Rokhsar D.S."/>
            <person name="Myers R.M."/>
            <person name="Rubin E.M."/>
            <person name="Lucas S.M."/>
        </authorList>
    </citation>
    <scope>NUCLEOTIDE SEQUENCE [LARGE SCALE GENOMIC DNA]</scope>
</reference>
<reference key="2">
    <citation type="submission" date="2005-09" db="EMBL/GenBank/DDBJ databases">
        <authorList>
            <person name="Mural R.J."/>
            <person name="Istrail S."/>
            <person name="Sutton G.G."/>
            <person name="Florea L."/>
            <person name="Halpern A.L."/>
            <person name="Mobarry C.M."/>
            <person name="Lippert R."/>
            <person name="Walenz B."/>
            <person name="Shatkay H."/>
            <person name="Dew I."/>
            <person name="Miller J.R."/>
            <person name="Flanigan M.J."/>
            <person name="Edwards N.J."/>
            <person name="Bolanos R."/>
            <person name="Fasulo D."/>
            <person name="Halldorsson B.V."/>
            <person name="Hannenhalli S."/>
            <person name="Turner R."/>
            <person name="Yooseph S."/>
            <person name="Lu F."/>
            <person name="Nusskern D.R."/>
            <person name="Shue B.C."/>
            <person name="Zheng X.H."/>
            <person name="Zhong F."/>
            <person name="Delcher A.L."/>
            <person name="Huson D.H."/>
            <person name="Kravitz S.A."/>
            <person name="Mouchard L."/>
            <person name="Reinert K."/>
            <person name="Remington K.A."/>
            <person name="Clark A.G."/>
            <person name="Waterman M.S."/>
            <person name="Eichler E.E."/>
            <person name="Adams M.D."/>
            <person name="Hunkapiller M.W."/>
            <person name="Myers E.W."/>
            <person name="Venter J.C."/>
        </authorList>
    </citation>
    <scope>NUCLEOTIDE SEQUENCE [LARGE SCALE GENOMIC DNA]</scope>
</reference>
<reference key="3">
    <citation type="journal article" date="2004" name="Genome Res.">
        <title>The status, quality, and expansion of the NIH full-length cDNA project: the Mammalian Gene Collection (MGC).</title>
        <authorList>
            <consortium name="The MGC Project Team"/>
        </authorList>
    </citation>
    <scope>NUCLEOTIDE SEQUENCE [LARGE SCALE MRNA]</scope>
    <source>
        <tissue>Brain</tissue>
    </source>
</reference>
<reference key="4">
    <citation type="journal article" date="2004" name="Nat. Biotechnol.">
        <title>Transcriptome characterization elucidates signaling networks that control human ES cell growth and differentiation.</title>
        <authorList>
            <person name="Brandenberger R."/>
            <person name="Wei H."/>
            <person name="Zhang S."/>
            <person name="Lei S."/>
            <person name="Murage J."/>
            <person name="Fisk G.J."/>
            <person name="Li Y."/>
            <person name="Xu C."/>
            <person name="Fang R."/>
            <person name="Guegler K."/>
            <person name="Rao M.S."/>
            <person name="Mandalam R."/>
            <person name="Lebkowski J."/>
            <person name="Stanton L.W."/>
        </authorList>
    </citation>
    <scope>NUCLEOTIDE SEQUENCE [MRNA] OF 1-153</scope>
    <source>
        <tissue>Embryonic stem cell</tissue>
    </source>
</reference>
<reference key="5">
    <citation type="journal article" date="2005" name="Mamm. Genome">
        <title>Transcriptome analysis of human gastric cancer.</title>
        <authorList>
            <person name="Oh J.H."/>
            <person name="Yang J.O."/>
            <person name="Hahn Y."/>
            <person name="Kim M.R."/>
            <person name="Byun S.S."/>
            <person name="Jeon Y.J."/>
            <person name="Kim J.M."/>
            <person name="Song K.S."/>
            <person name="Noh S.M."/>
            <person name="Kim S."/>
            <person name="Yoo H.S."/>
            <person name="Kim Y.S."/>
            <person name="Kim N.S."/>
        </authorList>
    </citation>
    <scope>NUCLEOTIDE SEQUENCE [MRNA] OF 8-128</scope>
    <source>
        <tissue>Stomach</tissue>
    </source>
</reference>
<name>PRR22_HUMAN</name>
<dbReference type="EMBL" id="AC011499">
    <property type="status" value="NOT_ANNOTATED_CDS"/>
    <property type="molecule type" value="Genomic_DNA"/>
</dbReference>
<dbReference type="EMBL" id="CH471139">
    <property type="protein sequence ID" value="EAW69147.1"/>
    <property type="status" value="ALT_SEQ"/>
    <property type="molecule type" value="Genomic_DNA"/>
</dbReference>
<dbReference type="EMBL" id="BC008985">
    <property type="protein sequence ID" value="AAH08985.1"/>
    <property type="status" value="ALT_SEQ"/>
    <property type="molecule type" value="mRNA"/>
</dbReference>
<dbReference type="EMBL" id="BC023278">
    <property type="protein sequence ID" value="AAH23278.1"/>
    <property type="status" value="ALT_SEQ"/>
    <property type="molecule type" value="mRNA"/>
</dbReference>
<dbReference type="EMBL" id="CN370733">
    <property type="status" value="NOT_ANNOTATED_CDS"/>
    <property type="molecule type" value="mRNA"/>
</dbReference>
<dbReference type="EMBL" id="BQ082540">
    <property type="status" value="NOT_ANNOTATED_CDS"/>
    <property type="molecule type" value="mRNA"/>
</dbReference>
<dbReference type="CCDS" id="CCDS45933.1"/>
<dbReference type="RefSeq" id="NP_001127788.1">
    <property type="nucleotide sequence ID" value="NM_001134316.2"/>
</dbReference>
<dbReference type="BioGRID" id="127854">
    <property type="interactions" value="30"/>
</dbReference>
<dbReference type="FunCoup" id="Q8IZ63">
    <property type="interactions" value="5"/>
</dbReference>
<dbReference type="IntAct" id="Q8IZ63">
    <property type="interactions" value="6"/>
</dbReference>
<dbReference type="STRING" id="9606.ENSP00000407653"/>
<dbReference type="GlyGen" id="Q8IZ63">
    <property type="glycosylation" value="2 sites"/>
</dbReference>
<dbReference type="PhosphoSitePlus" id="Q8IZ63"/>
<dbReference type="BioMuta" id="PRR22"/>
<dbReference type="DMDM" id="391358151"/>
<dbReference type="jPOST" id="Q8IZ63"/>
<dbReference type="MassIVE" id="Q8IZ63"/>
<dbReference type="PaxDb" id="9606-ENSP00000407653"/>
<dbReference type="PeptideAtlas" id="Q8IZ63"/>
<dbReference type="ProteomicsDB" id="71281"/>
<dbReference type="Antibodypedia" id="49704">
    <property type="antibodies" value="51 antibodies from 14 providers"/>
</dbReference>
<dbReference type="DNASU" id="163154"/>
<dbReference type="Ensembl" id="ENST00000419421.3">
    <property type="protein sequence ID" value="ENSP00000407653.2"/>
    <property type="gene ID" value="ENSG00000212123.4"/>
</dbReference>
<dbReference type="GeneID" id="163154"/>
<dbReference type="KEGG" id="hsa:163154"/>
<dbReference type="MANE-Select" id="ENST00000419421.3">
    <property type="protein sequence ID" value="ENSP00000407653.2"/>
    <property type="RefSeq nucleotide sequence ID" value="NM_001134316.2"/>
    <property type="RefSeq protein sequence ID" value="NP_001127788.1"/>
</dbReference>
<dbReference type="UCSC" id="uc010xiv.1">
    <property type="organism name" value="human"/>
</dbReference>
<dbReference type="AGR" id="HGNC:28354"/>
<dbReference type="CTD" id="163154"/>
<dbReference type="DisGeNET" id="163154"/>
<dbReference type="GeneCards" id="PRR22"/>
<dbReference type="HGNC" id="HGNC:28354">
    <property type="gene designation" value="PRR22"/>
</dbReference>
<dbReference type="HPA" id="ENSG00000212123">
    <property type="expression patterns" value="Tissue enriched (testis)"/>
</dbReference>
<dbReference type="neXtProt" id="NX_Q8IZ63"/>
<dbReference type="OpenTargets" id="ENSG00000212123"/>
<dbReference type="PharmGKB" id="PA165394215"/>
<dbReference type="VEuPathDB" id="HostDB:ENSG00000212123"/>
<dbReference type="eggNOG" id="ENOG502SI56">
    <property type="taxonomic scope" value="Eukaryota"/>
</dbReference>
<dbReference type="GeneTree" id="ENSGT00390000016128"/>
<dbReference type="HOGENOM" id="CLU_053707_0_0_1"/>
<dbReference type="InParanoid" id="Q8IZ63"/>
<dbReference type="OMA" id="RIEWTTP"/>
<dbReference type="OrthoDB" id="9941921at2759"/>
<dbReference type="PAN-GO" id="Q8IZ63">
    <property type="GO annotations" value="0 GO annotations based on evolutionary models"/>
</dbReference>
<dbReference type="PhylomeDB" id="Q8IZ63"/>
<dbReference type="TreeFam" id="TF350682"/>
<dbReference type="PathwayCommons" id="Q8IZ63"/>
<dbReference type="SignaLink" id="Q8IZ63"/>
<dbReference type="BioGRID-ORCS" id="163154">
    <property type="hits" value="36 hits in 1150 CRISPR screens"/>
</dbReference>
<dbReference type="GenomeRNAi" id="163154"/>
<dbReference type="Pharos" id="Q8IZ63">
    <property type="development level" value="Tdark"/>
</dbReference>
<dbReference type="PRO" id="PR:Q8IZ63"/>
<dbReference type="Proteomes" id="UP000005640">
    <property type="component" value="Chromosome 19"/>
</dbReference>
<dbReference type="RNAct" id="Q8IZ63">
    <property type="molecule type" value="protein"/>
</dbReference>
<dbReference type="Bgee" id="ENSG00000212123">
    <property type="expression patterns" value="Expressed in right testis and 91 other cell types or tissues"/>
</dbReference>
<dbReference type="ExpressionAtlas" id="Q8IZ63">
    <property type="expression patterns" value="baseline and differential"/>
</dbReference>
<dbReference type="InterPro" id="IPR031535">
    <property type="entry name" value="PRR22"/>
</dbReference>
<dbReference type="PANTHER" id="PTHR37871">
    <property type="entry name" value="PROLINE-RICH PROTEIN 22"/>
    <property type="match status" value="1"/>
</dbReference>
<dbReference type="PANTHER" id="PTHR37871:SF1">
    <property type="entry name" value="PROLINE-RICH PROTEIN 22"/>
    <property type="match status" value="1"/>
</dbReference>
<dbReference type="Pfam" id="PF15776">
    <property type="entry name" value="PRR22"/>
    <property type="match status" value="1"/>
</dbReference>